<sequence length="276" mass="30386">MIVRFLCWLTGLLLCTAAYALPQRVISLAPHATEMAYAAGMGEQLIAVSAWSDYPPEAKKLEQVASWQGINLERILALKPDLILAWREGNPQRPLEQLANFSIPIVYLDAKTLDDIPASLRQLATYSRHPEQAERAATDFQQEIGRLRHTGEGQNAASLRVFIQFGTQPLFTSSQATLQSQIVSLCGAENIFSDSPVPWPQVSREQVLRRQPQAIIIGGSPDKIASVQTFWQPQLAVPVITVNEDWFSRSGPRLLLAAQQICSQLTALSPGSSSAK</sequence>
<evidence type="ECO:0000255" key="1">
    <source>
        <dbReference type="HAMAP-Rule" id="MF_01000"/>
    </source>
</evidence>
<protein>
    <recommendedName>
        <fullName evidence="1">Vitamin B12-binding protein</fullName>
    </recommendedName>
</protein>
<accession>C6DC28</accession>
<name>BTUF_PECCP</name>
<feature type="signal peptide" evidence="1">
    <location>
        <begin position="1"/>
        <end position="20"/>
    </location>
</feature>
<feature type="chain" id="PRO_5000485903" description="Vitamin B12-binding protein">
    <location>
        <begin position="21"/>
        <end position="276"/>
    </location>
</feature>
<feature type="domain" description="Fe/B12 periplasmic-binding" evidence="1">
    <location>
        <begin position="24"/>
        <end position="273"/>
    </location>
</feature>
<feature type="site" description="Important for BtuC binding" evidence="1">
    <location>
        <position position="73"/>
    </location>
</feature>
<feature type="site" description="Important for BtuC binding" evidence="1">
    <location>
        <position position="205"/>
    </location>
</feature>
<feature type="disulfide bond" evidence="1">
    <location>
        <begin position="186"/>
        <end position="262"/>
    </location>
</feature>
<gene>
    <name evidence="1" type="primary">btuF</name>
    <name type="ordered locus">PC1_3099</name>
</gene>
<organism>
    <name type="scientific">Pectobacterium carotovorum subsp. carotovorum (strain PC1)</name>
    <dbReference type="NCBI Taxonomy" id="561230"/>
    <lineage>
        <taxon>Bacteria</taxon>
        <taxon>Pseudomonadati</taxon>
        <taxon>Pseudomonadota</taxon>
        <taxon>Gammaproteobacteria</taxon>
        <taxon>Enterobacterales</taxon>
        <taxon>Pectobacteriaceae</taxon>
        <taxon>Pectobacterium</taxon>
    </lineage>
</organism>
<dbReference type="EMBL" id="CP001657">
    <property type="protein sequence ID" value="ACT14122.1"/>
    <property type="molecule type" value="Genomic_DNA"/>
</dbReference>
<dbReference type="RefSeq" id="WP_015841268.1">
    <property type="nucleotide sequence ID" value="NC_012917.1"/>
</dbReference>
<dbReference type="SMR" id="C6DC28"/>
<dbReference type="STRING" id="561230.PC1_3099"/>
<dbReference type="KEGG" id="pct:PC1_3099"/>
<dbReference type="eggNOG" id="COG0614">
    <property type="taxonomic scope" value="Bacteria"/>
</dbReference>
<dbReference type="HOGENOM" id="CLU_038034_2_5_6"/>
<dbReference type="OrthoDB" id="6495095at2"/>
<dbReference type="Proteomes" id="UP000002736">
    <property type="component" value="Chromosome"/>
</dbReference>
<dbReference type="GO" id="GO:0042597">
    <property type="term" value="C:periplasmic space"/>
    <property type="evidence" value="ECO:0007669"/>
    <property type="project" value="UniProtKB-SubCell"/>
</dbReference>
<dbReference type="GO" id="GO:0031419">
    <property type="term" value="F:cobalamin binding"/>
    <property type="evidence" value="ECO:0007669"/>
    <property type="project" value="InterPro"/>
</dbReference>
<dbReference type="GO" id="GO:0015889">
    <property type="term" value="P:cobalamin transport"/>
    <property type="evidence" value="ECO:0007669"/>
    <property type="project" value="UniProtKB-UniRule"/>
</dbReference>
<dbReference type="CDD" id="cd01144">
    <property type="entry name" value="BtuF"/>
    <property type="match status" value="1"/>
</dbReference>
<dbReference type="Gene3D" id="3.40.50.1980">
    <property type="entry name" value="Nitrogenase molybdenum iron protein domain"/>
    <property type="match status" value="2"/>
</dbReference>
<dbReference type="HAMAP" id="MF_01000">
    <property type="entry name" value="BtuF"/>
    <property type="match status" value="1"/>
</dbReference>
<dbReference type="InterPro" id="IPR002491">
    <property type="entry name" value="ABC_transptr_periplasmic_BD"/>
</dbReference>
<dbReference type="InterPro" id="IPR023544">
    <property type="entry name" value="ABC_transptr_vit_B12-bd"/>
</dbReference>
<dbReference type="InterPro" id="IPR054828">
    <property type="entry name" value="Vit_B12_bind_prot"/>
</dbReference>
<dbReference type="InterPro" id="IPR051030">
    <property type="entry name" value="Vitamin_B12-ABC_binding"/>
</dbReference>
<dbReference type="NCBIfam" id="NF002894">
    <property type="entry name" value="PRK03379.1"/>
    <property type="match status" value="1"/>
</dbReference>
<dbReference type="NCBIfam" id="NF038402">
    <property type="entry name" value="TroA_like"/>
    <property type="match status" value="1"/>
</dbReference>
<dbReference type="PANTHER" id="PTHR42860">
    <property type="entry name" value="VITAMIN B12-BINDING PROTEIN"/>
    <property type="match status" value="1"/>
</dbReference>
<dbReference type="PANTHER" id="PTHR42860:SF1">
    <property type="entry name" value="VITAMIN B12-BINDING PROTEIN"/>
    <property type="match status" value="1"/>
</dbReference>
<dbReference type="Pfam" id="PF01497">
    <property type="entry name" value="Peripla_BP_2"/>
    <property type="match status" value="1"/>
</dbReference>
<dbReference type="SUPFAM" id="SSF53807">
    <property type="entry name" value="Helical backbone' metal receptor"/>
    <property type="match status" value="1"/>
</dbReference>
<dbReference type="PROSITE" id="PS50983">
    <property type="entry name" value="FE_B12_PBP"/>
    <property type="match status" value="1"/>
</dbReference>
<keyword id="KW-1015">Disulfide bond</keyword>
<keyword id="KW-0574">Periplasm</keyword>
<keyword id="KW-0732">Signal</keyword>
<keyword id="KW-0813">Transport</keyword>
<reference key="1">
    <citation type="submission" date="2009-07" db="EMBL/GenBank/DDBJ databases">
        <title>Complete sequence of Pectobacterium carotovorum subsp. carotovorum PC1.</title>
        <authorList>
            <consortium name="US DOE Joint Genome Institute"/>
            <person name="Lucas S."/>
            <person name="Copeland A."/>
            <person name="Lapidus A."/>
            <person name="Glavina del Rio T."/>
            <person name="Tice H."/>
            <person name="Bruce D."/>
            <person name="Goodwin L."/>
            <person name="Pitluck S."/>
            <person name="Munk A.C."/>
            <person name="Brettin T."/>
            <person name="Detter J.C."/>
            <person name="Han C."/>
            <person name="Tapia R."/>
            <person name="Larimer F."/>
            <person name="Land M."/>
            <person name="Hauser L."/>
            <person name="Kyrpides N."/>
            <person name="Mikhailova N."/>
            <person name="Balakrishnan V."/>
            <person name="Glasner J."/>
            <person name="Perna N.T."/>
        </authorList>
    </citation>
    <scope>NUCLEOTIDE SEQUENCE [LARGE SCALE GENOMIC DNA]</scope>
    <source>
        <strain>PC1</strain>
    </source>
</reference>
<proteinExistence type="inferred from homology"/>
<comment type="function">
    <text evidence="1">Part of the ABC transporter complex BtuCDF involved in vitamin B12 import. Binds vitamin B12 and delivers it to the periplasmic surface of BtuC.</text>
</comment>
<comment type="subunit">
    <text evidence="1">The complex is composed of two ATP-binding proteins (BtuD), two transmembrane proteins (BtuC) and a solute-binding protein (BtuF).</text>
</comment>
<comment type="subcellular location">
    <subcellularLocation>
        <location evidence="1">Periplasm</location>
    </subcellularLocation>
</comment>
<comment type="similarity">
    <text evidence="1">Belongs to the BtuF family.</text>
</comment>